<evidence type="ECO:0000255" key="1">
    <source>
        <dbReference type="HAMAP-Rule" id="MF_00382"/>
    </source>
</evidence>
<evidence type="ECO:0000305" key="2"/>
<proteinExistence type="inferred from homology"/>
<comment type="function">
    <text evidence="1">Binds directly to 23S ribosomal RNA and is necessary for the in vitro assembly process of the 50S ribosomal subunit. It is not involved in the protein synthesizing functions of that subunit.</text>
</comment>
<comment type="similarity">
    <text evidence="1">Belongs to the bacterial ribosomal protein bL20 family.</text>
</comment>
<sequence length="116" mass="13316">MARVKRGNVARKRRNKILKLAKGFRSGNSKLFRTANQRVMKALTNAYRDRRRRKRDFRRLWIARINAAARLHGVSYSRLIGALKKADIQINRKMLAQLAVLDSAGFKAIVDLALKA</sequence>
<keyword id="KW-1185">Reference proteome</keyword>
<keyword id="KW-0687">Ribonucleoprotein</keyword>
<keyword id="KW-0689">Ribosomal protein</keyword>
<keyword id="KW-0694">RNA-binding</keyword>
<keyword id="KW-0699">rRNA-binding</keyword>
<dbReference type="EMBL" id="CP000100">
    <property type="protein sequence ID" value="ABB57307.1"/>
    <property type="molecule type" value="Genomic_DNA"/>
</dbReference>
<dbReference type="RefSeq" id="WP_011242589.1">
    <property type="nucleotide sequence ID" value="NZ_JACJTX010000003.1"/>
</dbReference>
<dbReference type="SMR" id="Q31NR2"/>
<dbReference type="STRING" id="1140.Synpcc7942_1277"/>
<dbReference type="PaxDb" id="1140-Synpcc7942_1277"/>
<dbReference type="GeneID" id="72430138"/>
<dbReference type="KEGG" id="syf:Synpcc7942_1277"/>
<dbReference type="eggNOG" id="COG0292">
    <property type="taxonomic scope" value="Bacteria"/>
</dbReference>
<dbReference type="HOGENOM" id="CLU_123265_0_1_3"/>
<dbReference type="OrthoDB" id="9808966at2"/>
<dbReference type="BioCyc" id="SYNEL:SYNPCC7942_1277-MONOMER"/>
<dbReference type="Proteomes" id="UP000889800">
    <property type="component" value="Chromosome"/>
</dbReference>
<dbReference type="GO" id="GO:1990904">
    <property type="term" value="C:ribonucleoprotein complex"/>
    <property type="evidence" value="ECO:0007669"/>
    <property type="project" value="UniProtKB-KW"/>
</dbReference>
<dbReference type="GO" id="GO:0005840">
    <property type="term" value="C:ribosome"/>
    <property type="evidence" value="ECO:0007669"/>
    <property type="project" value="UniProtKB-KW"/>
</dbReference>
<dbReference type="GO" id="GO:0019843">
    <property type="term" value="F:rRNA binding"/>
    <property type="evidence" value="ECO:0007669"/>
    <property type="project" value="UniProtKB-UniRule"/>
</dbReference>
<dbReference type="GO" id="GO:0003735">
    <property type="term" value="F:structural constituent of ribosome"/>
    <property type="evidence" value="ECO:0007669"/>
    <property type="project" value="InterPro"/>
</dbReference>
<dbReference type="GO" id="GO:0000027">
    <property type="term" value="P:ribosomal large subunit assembly"/>
    <property type="evidence" value="ECO:0007669"/>
    <property type="project" value="UniProtKB-UniRule"/>
</dbReference>
<dbReference type="GO" id="GO:0006412">
    <property type="term" value="P:translation"/>
    <property type="evidence" value="ECO:0007669"/>
    <property type="project" value="InterPro"/>
</dbReference>
<dbReference type="CDD" id="cd07026">
    <property type="entry name" value="Ribosomal_L20"/>
    <property type="match status" value="1"/>
</dbReference>
<dbReference type="FunFam" id="1.10.1900.20:FF:000001">
    <property type="entry name" value="50S ribosomal protein L20"/>
    <property type="match status" value="1"/>
</dbReference>
<dbReference type="Gene3D" id="6.10.160.10">
    <property type="match status" value="1"/>
</dbReference>
<dbReference type="Gene3D" id="1.10.1900.20">
    <property type="entry name" value="Ribosomal protein L20"/>
    <property type="match status" value="1"/>
</dbReference>
<dbReference type="HAMAP" id="MF_00382">
    <property type="entry name" value="Ribosomal_bL20"/>
    <property type="match status" value="1"/>
</dbReference>
<dbReference type="InterPro" id="IPR005813">
    <property type="entry name" value="Ribosomal_bL20"/>
</dbReference>
<dbReference type="InterPro" id="IPR049946">
    <property type="entry name" value="RIBOSOMAL_L20_CS"/>
</dbReference>
<dbReference type="InterPro" id="IPR035566">
    <property type="entry name" value="Ribosomal_protein_bL20_C"/>
</dbReference>
<dbReference type="NCBIfam" id="TIGR01032">
    <property type="entry name" value="rplT_bact"/>
    <property type="match status" value="1"/>
</dbReference>
<dbReference type="PANTHER" id="PTHR10986">
    <property type="entry name" value="39S RIBOSOMAL PROTEIN L20"/>
    <property type="match status" value="1"/>
</dbReference>
<dbReference type="Pfam" id="PF00453">
    <property type="entry name" value="Ribosomal_L20"/>
    <property type="match status" value="1"/>
</dbReference>
<dbReference type="PRINTS" id="PR00062">
    <property type="entry name" value="RIBOSOMALL20"/>
</dbReference>
<dbReference type="SUPFAM" id="SSF74731">
    <property type="entry name" value="Ribosomal protein L20"/>
    <property type="match status" value="1"/>
</dbReference>
<dbReference type="PROSITE" id="PS00937">
    <property type="entry name" value="RIBOSOMAL_L20"/>
    <property type="match status" value="1"/>
</dbReference>
<organism>
    <name type="scientific">Synechococcus elongatus (strain ATCC 33912 / PCC 7942 / FACHB-805)</name>
    <name type="common">Anacystis nidulans R2</name>
    <dbReference type="NCBI Taxonomy" id="1140"/>
    <lineage>
        <taxon>Bacteria</taxon>
        <taxon>Bacillati</taxon>
        <taxon>Cyanobacteriota</taxon>
        <taxon>Cyanophyceae</taxon>
        <taxon>Synechococcales</taxon>
        <taxon>Synechococcaceae</taxon>
        <taxon>Synechococcus</taxon>
    </lineage>
</organism>
<name>RL20_SYNE7</name>
<reference key="1">
    <citation type="submission" date="2005-08" db="EMBL/GenBank/DDBJ databases">
        <title>Complete sequence of chromosome 1 of Synechococcus elongatus PCC 7942.</title>
        <authorList>
            <consortium name="US DOE Joint Genome Institute"/>
            <person name="Copeland A."/>
            <person name="Lucas S."/>
            <person name="Lapidus A."/>
            <person name="Barry K."/>
            <person name="Detter J.C."/>
            <person name="Glavina T."/>
            <person name="Hammon N."/>
            <person name="Israni S."/>
            <person name="Pitluck S."/>
            <person name="Schmutz J."/>
            <person name="Larimer F."/>
            <person name="Land M."/>
            <person name="Kyrpides N."/>
            <person name="Lykidis A."/>
            <person name="Golden S."/>
            <person name="Richardson P."/>
        </authorList>
    </citation>
    <scope>NUCLEOTIDE SEQUENCE [LARGE SCALE GENOMIC DNA]</scope>
    <source>
        <strain>ATCC 33912 / PCC 7942 / FACHB-805</strain>
    </source>
</reference>
<feature type="chain" id="PRO_0000243750" description="Large ribosomal subunit protein bL20">
    <location>
        <begin position="1"/>
        <end position="116"/>
    </location>
</feature>
<gene>
    <name evidence="1" type="primary">rplT</name>
    <name evidence="1" type="synonym">rpl20</name>
    <name type="ordered locus">Synpcc7942_1277</name>
</gene>
<protein>
    <recommendedName>
        <fullName evidence="1">Large ribosomal subunit protein bL20</fullName>
    </recommendedName>
    <alternativeName>
        <fullName evidence="2">50S ribosomal protein L20</fullName>
    </alternativeName>
</protein>
<accession>Q31NR2</accession>